<protein>
    <recommendedName>
        <fullName evidence="8">Rho guanine nucleotide exchange factor 8</fullName>
        <shortName evidence="8">AtRopGEF8</shortName>
    </recommendedName>
    <alternativeName>
        <fullName evidence="8">Rho of plants guanine nucleotide exchange factor 8</fullName>
    </alternativeName>
</protein>
<gene>
    <name evidence="8" type="primary">ROPGEF8</name>
    <name evidence="10" type="ordered locus">At3g24620</name>
    <name evidence="11" type="ORF">MOB24.21</name>
</gene>
<feature type="chain" id="PRO_0000406608" description="Rho guanine nucleotide exchange factor 8">
    <location>
        <begin position="1"/>
        <end position="523"/>
    </location>
</feature>
<feature type="domain" description="PRONE" evidence="1">
    <location>
        <begin position="76"/>
        <end position="440"/>
    </location>
</feature>
<feature type="region of interest" description="Disordered" evidence="2">
    <location>
        <begin position="44"/>
        <end position="83"/>
    </location>
</feature>
<feature type="region of interest" description="Disordered" evidence="2">
    <location>
        <begin position="442"/>
        <end position="523"/>
    </location>
</feature>
<feature type="compositionally biased region" description="Polar residues" evidence="2">
    <location>
        <begin position="44"/>
        <end position="57"/>
    </location>
</feature>
<feature type="compositionally biased region" description="Basic and acidic residues" evidence="2">
    <location>
        <begin position="465"/>
        <end position="475"/>
    </location>
</feature>
<feature type="mutagenesis site" description="Loss of homodimerization and GEF activity." evidence="4">
    <original>L</original>
    <variation>D</variation>
    <location>
        <position position="98"/>
    </location>
</feature>
<feature type="mutagenesis site" description="Decreases GEF activity 25-fold; when associated with A-175." evidence="4">
    <original>F</original>
    <variation>A</variation>
    <location>
        <position position="161"/>
    </location>
</feature>
<feature type="mutagenesis site" description="Decreases GEF activity 25-fold; when associated with A-161." evidence="4">
    <original>E</original>
    <variation>A</variation>
    <location>
        <position position="175"/>
    </location>
</feature>
<feature type="mutagenesis site" description="Decreases GEF activity 14-fold." evidence="4">
    <original>W</original>
    <variation>S</variation>
    <location>
        <position position="234"/>
    </location>
</feature>
<feature type="mutagenesis site" description="Loss of GEF activity." evidence="4">
    <original>W</original>
    <variation>S</variation>
    <location>
        <position position="235"/>
    </location>
</feature>
<feature type="mutagenesis site" description="Decreases GEF activity 20-fold." evidence="4">
    <original>E</original>
    <variation>A</variation>
    <location>
        <position position="413"/>
    </location>
</feature>
<feature type="sequence conflict" description="In Ref. 3; ABE65963." evidence="9" ref="3">
    <original>E</original>
    <variation>EK</variation>
    <location>
        <position position="278"/>
    </location>
</feature>
<feature type="helix" evidence="12">
    <location>
        <begin position="80"/>
        <end position="97"/>
    </location>
</feature>
<feature type="turn" evidence="12">
    <location>
        <begin position="98"/>
        <end position="100"/>
    </location>
</feature>
<feature type="strand" evidence="14">
    <location>
        <begin position="104"/>
        <end position="106"/>
    </location>
</feature>
<feature type="helix" evidence="12">
    <location>
        <begin position="111"/>
        <end position="127"/>
    </location>
</feature>
<feature type="strand" evidence="14">
    <location>
        <begin position="132"/>
        <end position="134"/>
    </location>
</feature>
<feature type="helix" evidence="12">
    <location>
        <begin position="138"/>
        <end position="152"/>
    </location>
</feature>
<feature type="helix" evidence="12">
    <location>
        <begin position="153"/>
        <end position="157"/>
    </location>
</feature>
<feature type="strand" evidence="12">
    <location>
        <begin position="159"/>
        <end position="163"/>
    </location>
</feature>
<feature type="strand" evidence="12">
    <location>
        <begin position="177"/>
        <end position="181"/>
    </location>
</feature>
<feature type="helix" evidence="12">
    <location>
        <begin position="183"/>
        <end position="186"/>
    </location>
</feature>
<feature type="helix" evidence="12">
    <location>
        <begin position="188"/>
        <end position="204"/>
    </location>
</feature>
<feature type="helix" evidence="12">
    <location>
        <begin position="205"/>
        <end position="207"/>
    </location>
</feature>
<feature type="turn" evidence="14">
    <location>
        <begin position="220"/>
        <end position="222"/>
    </location>
</feature>
<feature type="helix" evidence="13">
    <location>
        <begin position="231"/>
        <end position="233"/>
    </location>
</feature>
<feature type="helix" evidence="12">
    <location>
        <begin position="248"/>
        <end position="277"/>
    </location>
</feature>
<feature type="helix" evidence="12">
    <location>
        <begin position="283"/>
        <end position="288"/>
    </location>
</feature>
<feature type="helix" evidence="12">
    <location>
        <begin position="293"/>
        <end position="297"/>
    </location>
</feature>
<feature type="helix" evidence="12">
    <location>
        <begin position="299"/>
        <end position="305"/>
    </location>
</feature>
<feature type="strand" evidence="14">
    <location>
        <begin position="307"/>
        <end position="309"/>
    </location>
</feature>
<feature type="helix" evidence="12">
    <location>
        <begin position="312"/>
        <end position="317"/>
    </location>
</feature>
<feature type="helix" evidence="12">
    <location>
        <begin position="324"/>
        <end position="343"/>
    </location>
</feature>
<feature type="helix" evidence="12">
    <location>
        <begin position="360"/>
        <end position="380"/>
    </location>
</feature>
<feature type="helix" evidence="12">
    <location>
        <begin position="388"/>
        <end position="396"/>
    </location>
</feature>
<feature type="helix" evidence="12">
    <location>
        <begin position="400"/>
        <end position="436"/>
    </location>
</feature>
<dbReference type="EMBL" id="AB020746">
    <property type="protein sequence ID" value="BAB02015.1"/>
    <property type="molecule type" value="Genomic_DNA"/>
</dbReference>
<dbReference type="EMBL" id="CP002686">
    <property type="protein sequence ID" value="AEE76930.1"/>
    <property type="molecule type" value="Genomic_DNA"/>
</dbReference>
<dbReference type="EMBL" id="DQ446693">
    <property type="protein sequence ID" value="ABE65963.1"/>
    <property type="molecule type" value="mRNA"/>
</dbReference>
<dbReference type="RefSeq" id="NP_189105.1">
    <property type="nucleotide sequence ID" value="NM_113373.2"/>
</dbReference>
<dbReference type="PDB" id="2NTX">
    <property type="method" value="X-ray"/>
    <property type="resolution" value="2.20 A"/>
    <property type="chains" value="A/B=76-440"/>
</dbReference>
<dbReference type="PDB" id="2NTY">
    <property type="method" value="X-ray"/>
    <property type="resolution" value="3.10 A"/>
    <property type="chains" value="A/B=76-440"/>
</dbReference>
<dbReference type="PDB" id="2WBL">
    <property type="method" value="X-ray"/>
    <property type="resolution" value="2.90 A"/>
    <property type="chains" value="A/B=76-440"/>
</dbReference>
<dbReference type="PDBsum" id="2NTX"/>
<dbReference type="PDBsum" id="2NTY"/>
<dbReference type="PDBsum" id="2WBL"/>
<dbReference type="SMR" id="Q9LV40"/>
<dbReference type="BioGRID" id="7389">
    <property type="interactions" value="3"/>
</dbReference>
<dbReference type="IntAct" id="Q9LV40">
    <property type="interactions" value="2"/>
</dbReference>
<dbReference type="MINT" id="Q9LV40"/>
<dbReference type="STRING" id="3702.Q9LV40"/>
<dbReference type="iPTMnet" id="Q9LV40"/>
<dbReference type="PaxDb" id="3702-AT3G24620.1"/>
<dbReference type="ProteomicsDB" id="227962"/>
<dbReference type="EnsemblPlants" id="AT3G24620.1">
    <property type="protein sequence ID" value="AT3G24620.1"/>
    <property type="gene ID" value="AT3G24620"/>
</dbReference>
<dbReference type="GeneID" id="822058"/>
<dbReference type="Gramene" id="AT3G24620.1">
    <property type="protein sequence ID" value="AT3G24620.1"/>
    <property type="gene ID" value="AT3G24620"/>
</dbReference>
<dbReference type="KEGG" id="ath:AT3G24620"/>
<dbReference type="Araport" id="AT3G24620"/>
<dbReference type="TAIR" id="AT3G24620">
    <property type="gene designation" value="ROPGEF8"/>
</dbReference>
<dbReference type="eggNOG" id="ENOG502QSGR">
    <property type="taxonomic scope" value="Eukaryota"/>
</dbReference>
<dbReference type="HOGENOM" id="CLU_019073_1_0_1"/>
<dbReference type="InParanoid" id="Q9LV40"/>
<dbReference type="OMA" id="NNSIHWQ"/>
<dbReference type="PhylomeDB" id="Q9LV40"/>
<dbReference type="EvolutionaryTrace" id="Q9LV40"/>
<dbReference type="PRO" id="PR:Q9LV40"/>
<dbReference type="Proteomes" id="UP000006548">
    <property type="component" value="Chromosome 3"/>
</dbReference>
<dbReference type="ExpressionAtlas" id="Q9LV40">
    <property type="expression patterns" value="baseline and differential"/>
</dbReference>
<dbReference type="GO" id="GO:0005886">
    <property type="term" value="C:plasma membrane"/>
    <property type="evidence" value="ECO:0007669"/>
    <property type="project" value="UniProtKB-SubCell"/>
</dbReference>
<dbReference type="GO" id="GO:0005085">
    <property type="term" value="F:guanyl-nucleotide exchange factor activity"/>
    <property type="evidence" value="ECO:0000314"/>
    <property type="project" value="UniProtKB"/>
</dbReference>
<dbReference type="GO" id="GO:0042802">
    <property type="term" value="F:identical protein binding"/>
    <property type="evidence" value="ECO:0000353"/>
    <property type="project" value="UniProtKB"/>
</dbReference>
<dbReference type="FunFam" id="1.20.58.2010:FF:000001">
    <property type="entry name" value="Rop guanine nucleotide exchange factor 14"/>
    <property type="match status" value="1"/>
</dbReference>
<dbReference type="FunFam" id="1.20.58.2010:FF:000003">
    <property type="entry name" value="Rop guanine nucleotide exchange factor 14"/>
    <property type="match status" value="1"/>
</dbReference>
<dbReference type="FunFam" id="1.20.58.1310:FF:000001">
    <property type="entry name" value="Rop guanine nucleotide exchange factor 9"/>
    <property type="match status" value="1"/>
</dbReference>
<dbReference type="Gene3D" id="1.20.58.2010">
    <property type="entry name" value="PRONE domain, subdomain 1"/>
    <property type="match status" value="1"/>
</dbReference>
<dbReference type="Gene3D" id="1.20.58.1310">
    <property type="entry name" value="PRONE domain, subdomain 2"/>
    <property type="match status" value="1"/>
</dbReference>
<dbReference type="InterPro" id="IPR005512">
    <property type="entry name" value="PRONE_dom"/>
</dbReference>
<dbReference type="InterPro" id="IPR038937">
    <property type="entry name" value="RopGEF"/>
</dbReference>
<dbReference type="PANTHER" id="PTHR33101:SF55">
    <property type="entry name" value="RHO GUANINE NUCLEOTIDE EXCHANGE FACTOR 8-RELATED"/>
    <property type="match status" value="1"/>
</dbReference>
<dbReference type="PANTHER" id="PTHR33101">
    <property type="entry name" value="ROP GUANINE NUCLEOTIDE EXCHANGE FACTOR 1"/>
    <property type="match status" value="1"/>
</dbReference>
<dbReference type="Pfam" id="PF03759">
    <property type="entry name" value="PRONE"/>
    <property type="match status" value="1"/>
</dbReference>
<dbReference type="PROSITE" id="PS51334">
    <property type="entry name" value="PRONE"/>
    <property type="match status" value="1"/>
</dbReference>
<sequence>MVAALERGLSASKSFNFKRMFDSSSTKQQQSQTIVVENGDSHIVESNTPESQNSDSFVESPVESSLPMISPLTRPGKRSERQQADMEMMKDRFAKLLLGEDMSGGGKGVSSALALSNAITNLAASIFGEQTKLQPMPQDRQARWKKEIDWLLSVTDHIVEFVPSQQTSKDGVCTEIMVTRQRGDLLMNIPALRKLDAMLIDTLDNFRGHNEFWYVSRDSEEGQQARNDRTNDKWWLPPVKVPPGGLSEPSRRMLYFQKDSVTQVQKAAMAINAQVLSEMEIPESYIDSLPKNGRASLGDSIYKSITEEWFDPEQFLAMLDMSTEHKVLDLKNRIEASVVIWKRKLHTKDTKSSWGSAVSLEKRELFEERAETILVLLKQKFPGLPQSSLDISKIQFNKDVGQAVLESYSRILESLAYTVMSRIEDVLYTDTLALKQTLLAEETSDGGRTTETDSESAGSSNSGEEAEKHDPHSKTLLDFMGWNDNSSKGGDKPTKSPNLTPKKLSYLEKLENLNGFRSPKDRH</sequence>
<evidence type="ECO:0000255" key="1">
    <source>
        <dbReference type="PROSITE-ProRule" id="PRU00663"/>
    </source>
</evidence>
<evidence type="ECO:0000256" key="2">
    <source>
        <dbReference type="SAM" id="MobiDB-lite"/>
    </source>
</evidence>
<evidence type="ECO:0000269" key="3">
    <source>
    </source>
</evidence>
<evidence type="ECO:0000269" key="4">
    <source>
    </source>
</evidence>
<evidence type="ECO:0000269" key="5">
    <source>
    </source>
</evidence>
<evidence type="ECO:0000269" key="6">
    <source>
    </source>
</evidence>
<evidence type="ECO:0000269" key="7">
    <source>
    </source>
</evidence>
<evidence type="ECO:0000303" key="8">
    <source>
    </source>
</evidence>
<evidence type="ECO:0000305" key="9"/>
<evidence type="ECO:0000312" key="10">
    <source>
        <dbReference type="Araport" id="AT3G24620"/>
    </source>
</evidence>
<evidence type="ECO:0000312" key="11">
    <source>
        <dbReference type="EMBL" id="BAB02015.1"/>
    </source>
</evidence>
<evidence type="ECO:0007829" key="12">
    <source>
        <dbReference type="PDB" id="2NTX"/>
    </source>
</evidence>
<evidence type="ECO:0007829" key="13">
    <source>
        <dbReference type="PDB" id="2NTY"/>
    </source>
</evidence>
<evidence type="ECO:0007829" key="14">
    <source>
        <dbReference type="PDB" id="2WBL"/>
    </source>
</evidence>
<reference key="1">
    <citation type="journal article" date="2000" name="DNA Res.">
        <title>Structural analysis of Arabidopsis thaliana chromosome 3. II. Sequence features of the 4,251,695 bp regions covered by 90 P1, TAC and BAC clones.</title>
        <authorList>
            <person name="Kaneko T."/>
            <person name="Katoh T."/>
            <person name="Sato S."/>
            <person name="Nakamura Y."/>
            <person name="Asamizu E."/>
            <person name="Tabata S."/>
        </authorList>
    </citation>
    <scope>NUCLEOTIDE SEQUENCE [LARGE SCALE GENOMIC DNA]</scope>
    <source>
        <strain>cv. Columbia</strain>
    </source>
</reference>
<reference key="2">
    <citation type="journal article" date="2017" name="Plant J.">
        <title>Araport11: a complete reannotation of the Arabidopsis thaliana reference genome.</title>
        <authorList>
            <person name="Cheng C.Y."/>
            <person name="Krishnakumar V."/>
            <person name="Chan A.P."/>
            <person name="Thibaud-Nissen F."/>
            <person name="Schobel S."/>
            <person name="Town C.D."/>
        </authorList>
    </citation>
    <scope>GENOME REANNOTATION</scope>
    <source>
        <strain>cv. Columbia</strain>
    </source>
</reference>
<reference key="3">
    <citation type="journal article" date="2006" name="Plant Biotechnol. J.">
        <title>Simultaneous high-throughput recombinational cloning of open reading frames in closed and open configurations.</title>
        <authorList>
            <person name="Underwood B.A."/>
            <person name="Vanderhaeghen R."/>
            <person name="Whitford R."/>
            <person name="Town C.D."/>
            <person name="Hilson P."/>
        </authorList>
    </citation>
    <scope>NUCLEOTIDE SEQUENCE [LARGE SCALE MRNA]</scope>
    <source>
        <strain>cv. Columbia</strain>
    </source>
</reference>
<reference key="4">
    <citation type="journal article" date="2005" name="Nature">
        <title>A new family of RhoGEFs activates the Rop molecular switch in plants.</title>
        <authorList>
            <person name="Berken A."/>
            <person name="Thomas C."/>
            <person name="Wittinghofer A."/>
        </authorList>
    </citation>
    <scope>GENE FAMILY</scope>
</reference>
<reference key="5">
    <citation type="journal article" date="2006" name="Plant Cell">
        <title>Members of a novel class of Arabidopsis Rho guanine nucleotide exchange factors control Rho GTPase-dependent polar growth.</title>
        <authorList>
            <person name="Gu Y."/>
            <person name="Li S."/>
            <person name="Lord E.M."/>
            <person name="Yang Z."/>
        </authorList>
    </citation>
    <scope>INTERACTION WITH ARAC11/ROP1</scope>
    <scope>SUBCELLULAR LOCATION</scope>
    <scope>TISSUE SPECIFICITY</scope>
</reference>
<reference key="6">
    <citation type="journal article" date="2012" name="FEBS Lett.">
        <title>ROPGEF1 and ROPGEF4 are functional regulators of ROP11 GTPase in ABA-mediated stomatal closure in Arabidopsis.</title>
        <authorList>
            <person name="Li Z."/>
            <person name="Liu D."/>
        </authorList>
    </citation>
    <scope>INTERACTION WITH ARAC10/ROP11</scope>
    <scope>SUBCELLULAR LOCATION</scope>
    <scope>TISSUE SPECIFICITY</scope>
</reference>
<reference key="7">
    <citation type="journal article" date="2016" name="Nature">
        <title>Tip-localized receptors control pollen tube growth and LURE sensing in Arabidopsis.</title>
        <authorList>
            <person name="Takeuchi H."/>
            <person name="Higashiyama T."/>
        </authorList>
    </citation>
    <scope>INTERACTION WITH PRK6</scope>
</reference>
<reference key="8">
    <citation type="journal article" date="2007" name="Mol. Cell">
        <title>Structural evidence for a common intermediate in small G protein-GEF reactions.</title>
        <authorList>
            <person name="Thomas C."/>
            <person name="Fricke I."/>
            <person name="Scrima A."/>
            <person name="Berken A."/>
            <person name="Wittinghofer A."/>
        </authorList>
    </citation>
    <scope>X-RAY CRYSTALLOGRAPHY (2.20 ANGSTROMS) OF 76-440</scope>
    <scope>FUNCTION</scope>
    <scope>SUBUNIT</scope>
    <scope>INTERACTION WITH ARAC5/ROP4</scope>
    <scope>MUTAGENESIS OF LEU-98; PHE-161; GLU-175; TRP-234; TRP-235 AND GLU-413</scope>
</reference>
<reference key="9">
    <citation type="journal article" date="2009" name="Biol. Chem.">
        <title>3D structure of a binary ROP-PRONE complex: the final intermediate for a complete set of molecular snapshots of the RopGEF reaction.</title>
        <authorList>
            <person name="Thomas C."/>
            <person name="Fricke I."/>
            <person name="Weyand M."/>
            <person name="Berken A."/>
        </authorList>
    </citation>
    <scope>X-RAY CRYSTALLOGRAPHY (2.90 ANGSTROMS) OF 76-440</scope>
    <scope>SUBUNIT</scope>
    <scope>INTERACTION WITH ARAC5/ROP4</scope>
</reference>
<organism>
    <name type="scientific">Arabidopsis thaliana</name>
    <name type="common">Mouse-ear cress</name>
    <dbReference type="NCBI Taxonomy" id="3702"/>
    <lineage>
        <taxon>Eukaryota</taxon>
        <taxon>Viridiplantae</taxon>
        <taxon>Streptophyta</taxon>
        <taxon>Embryophyta</taxon>
        <taxon>Tracheophyta</taxon>
        <taxon>Spermatophyta</taxon>
        <taxon>Magnoliopsida</taxon>
        <taxon>eudicotyledons</taxon>
        <taxon>Gunneridae</taxon>
        <taxon>Pentapetalae</taxon>
        <taxon>rosids</taxon>
        <taxon>malvids</taxon>
        <taxon>Brassicales</taxon>
        <taxon>Brassicaceae</taxon>
        <taxon>Camelineae</taxon>
        <taxon>Arabidopsis</taxon>
    </lineage>
</organism>
<keyword id="KW-0002">3D-structure</keyword>
<keyword id="KW-1003">Cell membrane</keyword>
<keyword id="KW-0344">Guanine-nucleotide releasing factor</keyword>
<keyword id="KW-0472">Membrane</keyword>
<keyword id="KW-1185">Reference proteome</keyword>
<accession>Q9LV40</accession>
<accession>Q1PEM4</accession>
<name>ROGF8_ARATH</name>
<proteinExistence type="evidence at protein level"/>
<comment type="function">
    <text evidence="4">Guanine-nucleotide exchange factor (GEF) that acts as an activator of Rop (Rho of plants) GTPases by promoting the exchange of GDP for GTP. Active as homodimer.</text>
</comment>
<comment type="subunit">
    <text evidence="3 4 5 6 7">Homodimer. The homodimer interacts with ARAC5/ROP4. Interacts with ARAC11/ROP1 and ARAC10/ROP11. Interacts with PRK6 (PubMed:26961657).</text>
</comment>
<comment type="subcellular location">
    <subcellularLocation>
        <location evidence="3 6">Cell membrane</location>
    </subcellularLocation>
    <text>Localizes to the apical region of the pollen tube plasma membrane.</text>
</comment>
<comment type="tissue specificity">
    <text evidence="3 6">Expressed in pollen grains and pollen tubes.</text>
</comment>
<comment type="domain">
    <text>The PRONE (plant-specific Rop nucleotide exchanger) domain is responsible for the GEF activity.</text>
</comment>